<feature type="chain" id="PRO_0000356629" description="Large ribosomal subunit protein bL33B">
    <location>
        <begin position="1"/>
        <end position="55"/>
    </location>
</feature>
<keyword id="KW-0687">Ribonucleoprotein</keyword>
<keyword id="KW-0689">Ribosomal protein</keyword>
<comment type="similarity">
    <text evidence="1">Belongs to the bacterial ribosomal protein bL33 family.</text>
</comment>
<proteinExistence type="inferred from homology"/>
<organism>
    <name type="scientific">Rhodococcus jostii (strain RHA1)</name>
    <dbReference type="NCBI Taxonomy" id="101510"/>
    <lineage>
        <taxon>Bacteria</taxon>
        <taxon>Bacillati</taxon>
        <taxon>Actinomycetota</taxon>
        <taxon>Actinomycetes</taxon>
        <taxon>Mycobacteriales</taxon>
        <taxon>Nocardiaceae</taxon>
        <taxon>Rhodococcus</taxon>
    </lineage>
</organism>
<accession>Q0S4Z0</accession>
<dbReference type="EMBL" id="CP000431">
    <property type="protein sequence ID" value="ABG97396.1"/>
    <property type="molecule type" value="Genomic_DNA"/>
</dbReference>
<dbReference type="RefSeq" id="WP_011597767.1">
    <property type="nucleotide sequence ID" value="NC_008268.1"/>
</dbReference>
<dbReference type="SMR" id="Q0S4Z0"/>
<dbReference type="KEGG" id="rha:RHA1_ro05616"/>
<dbReference type="PATRIC" id="fig|101510.16.peg.5661"/>
<dbReference type="eggNOG" id="COG0267">
    <property type="taxonomic scope" value="Bacteria"/>
</dbReference>
<dbReference type="HOGENOM" id="CLU_190949_1_1_11"/>
<dbReference type="OrthoDB" id="21586at2"/>
<dbReference type="Proteomes" id="UP000008710">
    <property type="component" value="Chromosome"/>
</dbReference>
<dbReference type="GO" id="GO:0022625">
    <property type="term" value="C:cytosolic large ribosomal subunit"/>
    <property type="evidence" value="ECO:0007669"/>
    <property type="project" value="TreeGrafter"/>
</dbReference>
<dbReference type="GO" id="GO:0003735">
    <property type="term" value="F:structural constituent of ribosome"/>
    <property type="evidence" value="ECO:0007669"/>
    <property type="project" value="InterPro"/>
</dbReference>
<dbReference type="GO" id="GO:0006412">
    <property type="term" value="P:translation"/>
    <property type="evidence" value="ECO:0007669"/>
    <property type="project" value="UniProtKB-UniRule"/>
</dbReference>
<dbReference type="FunFam" id="2.20.28.120:FF:000002">
    <property type="entry name" value="50S ribosomal protein L33"/>
    <property type="match status" value="1"/>
</dbReference>
<dbReference type="Gene3D" id="2.20.28.120">
    <property type="entry name" value="Ribosomal protein L33"/>
    <property type="match status" value="1"/>
</dbReference>
<dbReference type="HAMAP" id="MF_00294">
    <property type="entry name" value="Ribosomal_bL33"/>
    <property type="match status" value="1"/>
</dbReference>
<dbReference type="InterPro" id="IPR001705">
    <property type="entry name" value="Ribosomal_bL33"/>
</dbReference>
<dbReference type="InterPro" id="IPR018264">
    <property type="entry name" value="Ribosomal_bL33_CS"/>
</dbReference>
<dbReference type="InterPro" id="IPR038584">
    <property type="entry name" value="Ribosomal_bL33_sf"/>
</dbReference>
<dbReference type="InterPro" id="IPR011332">
    <property type="entry name" value="Ribosomal_zn-bd"/>
</dbReference>
<dbReference type="NCBIfam" id="NF001860">
    <property type="entry name" value="PRK00595.1"/>
    <property type="match status" value="1"/>
</dbReference>
<dbReference type="NCBIfam" id="TIGR01023">
    <property type="entry name" value="rpmG_bact"/>
    <property type="match status" value="1"/>
</dbReference>
<dbReference type="PANTHER" id="PTHR15238">
    <property type="entry name" value="54S RIBOSOMAL PROTEIN L39, MITOCHONDRIAL"/>
    <property type="match status" value="1"/>
</dbReference>
<dbReference type="PANTHER" id="PTHR15238:SF1">
    <property type="entry name" value="LARGE RIBOSOMAL SUBUNIT PROTEIN BL33M"/>
    <property type="match status" value="1"/>
</dbReference>
<dbReference type="Pfam" id="PF00471">
    <property type="entry name" value="Ribosomal_L33"/>
    <property type="match status" value="1"/>
</dbReference>
<dbReference type="SUPFAM" id="SSF57829">
    <property type="entry name" value="Zn-binding ribosomal proteins"/>
    <property type="match status" value="1"/>
</dbReference>
<dbReference type="PROSITE" id="PS00582">
    <property type="entry name" value="RIBOSOMAL_L33"/>
    <property type="match status" value="1"/>
</dbReference>
<sequence>MAARNEIRPIVKLKSTAGTGYTYVTRKNRRNDPDRLVMKKYDPVGRKHVDFREEK</sequence>
<name>RL332_RHOJR</name>
<evidence type="ECO:0000255" key="1">
    <source>
        <dbReference type="HAMAP-Rule" id="MF_00294"/>
    </source>
</evidence>
<protein>
    <recommendedName>
        <fullName evidence="1">Large ribosomal subunit protein bL33B</fullName>
    </recommendedName>
    <alternativeName>
        <fullName evidence="1">50S ribosomal protein L33 2</fullName>
    </alternativeName>
</protein>
<gene>
    <name evidence="1" type="primary">rpmG2</name>
    <name type="ordered locus">RHA1_ro05616</name>
</gene>
<reference key="1">
    <citation type="journal article" date="2006" name="Proc. Natl. Acad. Sci. U.S.A.">
        <title>The complete genome of Rhodococcus sp. RHA1 provides insights into a catabolic powerhouse.</title>
        <authorList>
            <person name="McLeod M.P."/>
            <person name="Warren R.L."/>
            <person name="Hsiao W.W.L."/>
            <person name="Araki N."/>
            <person name="Myhre M."/>
            <person name="Fernandes C."/>
            <person name="Miyazawa D."/>
            <person name="Wong W."/>
            <person name="Lillquist A.L."/>
            <person name="Wang D."/>
            <person name="Dosanjh M."/>
            <person name="Hara H."/>
            <person name="Petrescu A."/>
            <person name="Morin R.D."/>
            <person name="Yang G."/>
            <person name="Stott J.M."/>
            <person name="Schein J.E."/>
            <person name="Shin H."/>
            <person name="Smailus D."/>
            <person name="Siddiqui A.S."/>
            <person name="Marra M.A."/>
            <person name="Jones S.J.M."/>
            <person name="Holt R."/>
            <person name="Brinkman F.S.L."/>
            <person name="Miyauchi K."/>
            <person name="Fukuda M."/>
            <person name="Davies J.E."/>
            <person name="Mohn W.W."/>
            <person name="Eltis L.D."/>
        </authorList>
    </citation>
    <scope>NUCLEOTIDE SEQUENCE [LARGE SCALE GENOMIC DNA]</scope>
    <source>
        <strain>RHA1</strain>
    </source>
</reference>